<reference key="1">
    <citation type="journal article" date="2005" name="Proc. Natl. Acad. Sci. U.S.A.">
        <title>Complete genome sequence of Vibrio fischeri: a symbiotic bacterium with pathogenic congeners.</title>
        <authorList>
            <person name="Ruby E.G."/>
            <person name="Urbanowski M."/>
            <person name="Campbell J."/>
            <person name="Dunn A."/>
            <person name="Faini M."/>
            <person name="Gunsalus R."/>
            <person name="Lostroh P."/>
            <person name="Lupp C."/>
            <person name="McCann J."/>
            <person name="Millikan D."/>
            <person name="Schaefer A."/>
            <person name="Stabb E."/>
            <person name="Stevens A."/>
            <person name="Visick K."/>
            <person name="Whistler C."/>
            <person name="Greenberg E.P."/>
        </authorList>
    </citation>
    <scope>NUCLEOTIDE SEQUENCE [LARGE SCALE GENOMIC DNA]</scope>
    <source>
        <strain>ATCC 700601 / ES114</strain>
    </source>
</reference>
<evidence type="ECO:0000255" key="1">
    <source>
        <dbReference type="HAMAP-Rule" id="MF_01537"/>
    </source>
</evidence>
<name>PPNP_ALIF1</name>
<accession>Q5E022</accession>
<keyword id="KW-0328">Glycosyltransferase</keyword>
<keyword id="KW-1185">Reference proteome</keyword>
<keyword id="KW-0808">Transferase</keyword>
<feature type="chain" id="PRO_0000211785" description="Pyrimidine/purine nucleoside phosphorylase">
    <location>
        <begin position="1"/>
        <end position="93"/>
    </location>
</feature>
<gene>
    <name evidence="1" type="primary">ppnP</name>
    <name type="ordered locus">VF_A0554</name>
</gene>
<sequence length="93" mass="10139">MLTVNSYFEDKVKSIGFEQNSNAISVGVMLPGNYTFGTAAAEKMSVITGALTIKRSTDADWVTFSSGEDFSVEGNSSFEVKVEIETAYLCEYL</sequence>
<organism>
    <name type="scientific">Aliivibrio fischeri (strain ATCC 700601 / ES114)</name>
    <name type="common">Vibrio fischeri</name>
    <dbReference type="NCBI Taxonomy" id="312309"/>
    <lineage>
        <taxon>Bacteria</taxon>
        <taxon>Pseudomonadati</taxon>
        <taxon>Pseudomonadota</taxon>
        <taxon>Gammaproteobacteria</taxon>
        <taxon>Vibrionales</taxon>
        <taxon>Vibrionaceae</taxon>
        <taxon>Aliivibrio</taxon>
    </lineage>
</organism>
<dbReference type="EC" id="2.4.2.1" evidence="1"/>
<dbReference type="EC" id="2.4.2.2" evidence="1"/>
<dbReference type="EMBL" id="CP000021">
    <property type="protein sequence ID" value="AAW87624.1"/>
    <property type="molecule type" value="Genomic_DNA"/>
</dbReference>
<dbReference type="RefSeq" id="WP_005422703.1">
    <property type="nucleotide sequence ID" value="NZ_CAWLES010000002.1"/>
</dbReference>
<dbReference type="RefSeq" id="YP_206512.1">
    <property type="nucleotide sequence ID" value="NC_006841.2"/>
</dbReference>
<dbReference type="SMR" id="Q5E022"/>
<dbReference type="STRING" id="312309.VF_A0554"/>
<dbReference type="EnsemblBacteria" id="AAW87624">
    <property type="protein sequence ID" value="AAW87624"/>
    <property type="gene ID" value="VF_A0554"/>
</dbReference>
<dbReference type="GeneID" id="54165879"/>
<dbReference type="KEGG" id="vfi:VF_A0554"/>
<dbReference type="PATRIC" id="fig|312309.11.peg.3160"/>
<dbReference type="eggNOG" id="COG3123">
    <property type="taxonomic scope" value="Bacteria"/>
</dbReference>
<dbReference type="HOGENOM" id="CLU_157874_0_0_6"/>
<dbReference type="OrthoDB" id="9793848at2"/>
<dbReference type="Proteomes" id="UP000000537">
    <property type="component" value="Chromosome II"/>
</dbReference>
<dbReference type="GO" id="GO:0005829">
    <property type="term" value="C:cytosol"/>
    <property type="evidence" value="ECO:0007669"/>
    <property type="project" value="TreeGrafter"/>
</dbReference>
<dbReference type="GO" id="GO:0047975">
    <property type="term" value="F:guanosine phosphorylase activity"/>
    <property type="evidence" value="ECO:0007669"/>
    <property type="project" value="UniProtKB-EC"/>
</dbReference>
<dbReference type="GO" id="GO:0004731">
    <property type="term" value="F:purine-nucleoside phosphorylase activity"/>
    <property type="evidence" value="ECO:0007669"/>
    <property type="project" value="UniProtKB-UniRule"/>
</dbReference>
<dbReference type="GO" id="GO:0009032">
    <property type="term" value="F:thymidine phosphorylase activity"/>
    <property type="evidence" value="ECO:0007669"/>
    <property type="project" value="UniProtKB-EC"/>
</dbReference>
<dbReference type="GO" id="GO:0004850">
    <property type="term" value="F:uridine phosphorylase activity"/>
    <property type="evidence" value="ECO:0007669"/>
    <property type="project" value="UniProtKB-EC"/>
</dbReference>
<dbReference type="FunFam" id="2.60.120.10:FF:000016">
    <property type="entry name" value="Pyrimidine/purine nucleoside phosphorylase"/>
    <property type="match status" value="1"/>
</dbReference>
<dbReference type="Gene3D" id="2.60.120.10">
    <property type="entry name" value="Jelly Rolls"/>
    <property type="match status" value="1"/>
</dbReference>
<dbReference type="HAMAP" id="MF_01537">
    <property type="entry name" value="Nucleos_phosphorylase_PpnP"/>
    <property type="match status" value="1"/>
</dbReference>
<dbReference type="InterPro" id="IPR009664">
    <property type="entry name" value="Ppnp"/>
</dbReference>
<dbReference type="InterPro" id="IPR014710">
    <property type="entry name" value="RmlC-like_jellyroll"/>
</dbReference>
<dbReference type="InterPro" id="IPR011051">
    <property type="entry name" value="RmlC_Cupin_sf"/>
</dbReference>
<dbReference type="PANTHER" id="PTHR36540">
    <property type="entry name" value="PYRIMIDINE/PURINE NUCLEOSIDE PHOSPHORYLASE"/>
    <property type="match status" value="1"/>
</dbReference>
<dbReference type="PANTHER" id="PTHR36540:SF1">
    <property type="entry name" value="PYRIMIDINE_PURINE NUCLEOSIDE PHOSPHORYLASE"/>
    <property type="match status" value="1"/>
</dbReference>
<dbReference type="Pfam" id="PF06865">
    <property type="entry name" value="Ppnp"/>
    <property type="match status" value="1"/>
</dbReference>
<dbReference type="SUPFAM" id="SSF51182">
    <property type="entry name" value="RmlC-like cupins"/>
    <property type="match status" value="1"/>
</dbReference>
<proteinExistence type="inferred from homology"/>
<comment type="function">
    <text evidence="1">Catalyzes the phosphorolysis of diverse nucleosides, yielding D-ribose 1-phosphate and the respective free bases. Can use uridine, adenosine, guanosine, cytidine, thymidine, inosine and xanthosine as substrates. Also catalyzes the reverse reactions.</text>
</comment>
<comment type="catalytic activity">
    <reaction evidence="1">
        <text>a purine D-ribonucleoside + phosphate = a purine nucleobase + alpha-D-ribose 1-phosphate</text>
        <dbReference type="Rhea" id="RHEA:19805"/>
        <dbReference type="ChEBI" id="CHEBI:26386"/>
        <dbReference type="ChEBI" id="CHEBI:43474"/>
        <dbReference type="ChEBI" id="CHEBI:57720"/>
        <dbReference type="ChEBI" id="CHEBI:142355"/>
        <dbReference type="EC" id="2.4.2.1"/>
    </reaction>
</comment>
<comment type="catalytic activity">
    <reaction evidence="1">
        <text>adenosine + phosphate = alpha-D-ribose 1-phosphate + adenine</text>
        <dbReference type="Rhea" id="RHEA:27642"/>
        <dbReference type="ChEBI" id="CHEBI:16335"/>
        <dbReference type="ChEBI" id="CHEBI:16708"/>
        <dbReference type="ChEBI" id="CHEBI:43474"/>
        <dbReference type="ChEBI" id="CHEBI:57720"/>
        <dbReference type="EC" id="2.4.2.1"/>
    </reaction>
</comment>
<comment type="catalytic activity">
    <reaction evidence="1">
        <text>cytidine + phosphate = cytosine + alpha-D-ribose 1-phosphate</text>
        <dbReference type="Rhea" id="RHEA:52540"/>
        <dbReference type="ChEBI" id="CHEBI:16040"/>
        <dbReference type="ChEBI" id="CHEBI:17562"/>
        <dbReference type="ChEBI" id="CHEBI:43474"/>
        <dbReference type="ChEBI" id="CHEBI:57720"/>
        <dbReference type="EC" id="2.4.2.2"/>
    </reaction>
</comment>
<comment type="catalytic activity">
    <reaction evidence="1">
        <text>guanosine + phosphate = alpha-D-ribose 1-phosphate + guanine</text>
        <dbReference type="Rhea" id="RHEA:13233"/>
        <dbReference type="ChEBI" id="CHEBI:16235"/>
        <dbReference type="ChEBI" id="CHEBI:16750"/>
        <dbReference type="ChEBI" id="CHEBI:43474"/>
        <dbReference type="ChEBI" id="CHEBI:57720"/>
        <dbReference type="EC" id="2.4.2.1"/>
    </reaction>
</comment>
<comment type="catalytic activity">
    <reaction evidence="1">
        <text>inosine + phosphate = alpha-D-ribose 1-phosphate + hypoxanthine</text>
        <dbReference type="Rhea" id="RHEA:27646"/>
        <dbReference type="ChEBI" id="CHEBI:17368"/>
        <dbReference type="ChEBI" id="CHEBI:17596"/>
        <dbReference type="ChEBI" id="CHEBI:43474"/>
        <dbReference type="ChEBI" id="CHEBI:57720"/>
        <dbReference type="EC" id="2.4.2.1"/>
    </reaction>
</comment>
<comment type="catalytic activity">
    <reaction evidence="1">
        <text>thymidine + phosphate = 2-deoxy-alpha-D-ribose 1-phosphate + thymine</text>
        <dbReference type="Rhea" id="RHEA:16037"/>
        <dbReference type="ChEBI" id="CHEBI:17748"/>
        <dbReference type="ChEBI" id="CHEBI:17821"/>
        <dbReference type="ChEBI" id="CHEBI:43474"/>
        <dbReference type="ChEBI" id="CHEBI:57259"/>
        <dbReference type="EC" id="2.4.2.2"/>
    </reaction>
</comment>
<comment type="catalytic activity">
    <reaction evidence="1">
        <text>uridine + phosphate = alpha-D-ribose 1-phosphate + uracil</text>
        <dbReference type="Rhea" id="RHEA:24388"/>
        <dbReference type="ChEBI" id="CHEBI:16704"/>
        <dbReference type="ChEBI" id="CHEBI:17568"/>
        <dbReference type="ChEBI" id="CHEBI:43474"/>
        <dbReference type="ChEBI" id="CHEBI:57720"/>
        <dbReference type="EC" id="2.4.2.2"/>
    </reaction>
</comment>
<comment type="catalytic activity">
    <reaction evidence="1">
        <text>xanthosine + phosphate = alpha-D-ribose 1-phosphate + xanthine</text>
        <dbReference type="Rhea" id="RHEA:27638"/>
        <dbReference type="ChEBI" id="CHEBI:17712"/>
        <dbReference type="ChEBI" id="CHEBI:18107"/>
        <dbReference type="ChEBI" id="CHEBI:43474"/>
        <dbReference type="ChEBI" id="CHEBI:57720"/>
        <dbReference type="EC" id="2.4.2.1"/>
    </reaction>
</comment>
<comment type="similarity">
    <text evidence="1">Belongs to the nucleoside phosphorylase PpnP family.</text>
</comment>
<protein>
    <recommendedName>
        <fullName evidence="1">Pyrimidine/purine nucleoside phosphorylase</fullName>
        <ecNumber evidence="1">2.4.2.1</ecNumber>
        <ecNumber evidence="1">2.4.2.2</ecNumber>
    </recommendedName>
    <alternativeName>
        <fullName evidence="1">Adenosine phosphorylase</fullName>
    </alternativeName>
    <alternativeName>
        <fullName evidence="1">Cytidine phosphorylase</fullName>
    </alternativeName>
    <alternativeName>
        <fullName evidence="1">Guanosine phosphorylase</fullName>
    </alternativeName>
    <alternativeName>
        <fullName evidence="1">Inosine phosphorylase</fullName>
    </alternativeName>
    <alternativeName>
        <fullName evidence="1">Thymidine phosphorylase</fullName>
    </alternativeName>
    <alternativeName>
        <fullName evidence="1">Uridine phosphorylase</fullName>
    </alternativeName>
    <alternativeName>
        <fullName evidence="1">Xanthosine phosphorylase</fullName>
    </alternativeName>
</protein>